<accession>O87786</accession>
<sequence length="38" mass="4081">MSSEFAATWLPAVFVPLIGLVTPAVFIVLIGRYITATD</sequence>
<reference key="1">
    <citation type="journal article" date="1998" name="Photosyn. Res.">
        <title>Characterization of the photosystem I subunits PsaI and PsaL from two strains of the marine oxyphototrophic.</title>
        <authorList>
            <person name="van der Staay G.W.M."/>
            <person name="Moon-van der Staay S.Y."/>
            <person name="Garczarek L."/>
            <person name="Partensky F."/>
        </authorList>
    </citation>
    <scope>NUCLEOTIDE SEQUENCE [GENOMIC DNA]</scope>
    <source>
        <strain>SARG / CCMP1375 / SS120</strain>
    </source>
</reference>
<reference key="2">
    <citation type="journal article" date="2003" name="Proc. Natl. Acad. Sci. U.S.A.">
        <title>Genome sequence of the cyanobacterium Prochlorococcus marinus SS120, a nearly minimal oxyphototrophic genome.</title>
        <authorList>
            <person name="Dufresne A."/>
            <person name="Salanoubat M."/>
            <person name="Partensky F."/>
            <person name="Artiguenave F."/>
            <person name="Axmann I.M."/>
            <person name="Barbe V."/>
            <person name="Duprat S."/>
            <person name="Galperin M.Y."/>
            <person name="Koonin E.V."/>
            <person name="Le Gall F."/>
            <person name="Makarova K.S."/>
            <person name="Ostrowski M."/>
            <person name="Oztas S."/>
            <person name="Robert C."/>
            <person name="Rogozin I.B."/>
            <person name="Scanlan D.J."/>
            <person name="Tandeau de Marsac N."/>
            <person name="Weissenbach J."/>
            <person name="Wincker P."/>
            <person name="Wolf Y.I."/>
            <person name="Hess W.R."/>
        </authorList>
    </citation>
    <scope>NUCLEOTIDE SEQUENCE [LARGE SCALE GENOMIC DNA]</scope>
    <source>
        <strain>SARG / CCMP1375 / SS120</strain>
    </source>
</reference>
<comment type="function">
    <text>May help in the organization of the PsaL subunit.</text>
</comment>
<comment type="subcellular location">
    <subcellularLocation>
        <location evidence="1">Cellular thylakoid membrane</location>
        <topology evidence="1">Single-pass membrane protein</topology>
    </subcellularLocation>
</comment>
<comment type="similarity">
    <text evidence="3">Belongs to the PsaI family.</text>
</comment>
<comment type="sequence caution" evidence="3">
    <conflict type="erroneous initiation">
        <sequence resource="EMBL-CDS" id="CAB11178"/>
    </conflict>
</comment>
<feature type="chain" id="PRO_0000194681" description="Photosystem I reaction center subunit VIII">
    <location>
        <begin position="1"/>
        <end position="38"/>
    </location>
</feature>
<feature type="transmembrane region" description="Helical" evidence="2">
    <location>
        <begin position="12"/>
        <end position="32"/>
    </location>
</feature>
<name>PSAI_PROMA</name>
<dbReference type="EMBL" id="Z98594">
    <property type="protein sequence ID" value="CAB11178.1"/>
    <property type="status" value="ALT_INIT"/>
    <property type="molecule type" value="Genomic_DNA"/>
</dbReference>
<dbReference type="EMBL" id="AE017126">
    <property type="protein sequence ID" value="AAQ00722.1"/>
    <property type="molecule type" value="Genomic_DNA"/>
</dbReference>
<dbReference type="RefSeq" id="NP_876069.1">
    <property type="nucleotide sequence ID" value="NC_005042.1"/>
</dbReference>
<dbReference type="RefSeq" id="WP_011125827.1">
    <property type="nucleotide sequence ID" value="NC_005042.1"/>
</dbReference>
<dbReference type="SMR" id="O87786"/>
<dbReference type="STRING" id="167539.Pro_1678"/>
<dbReference type="EnsemblBacteria" id="AAQ00722">
    <property type="protein sequence ID" value="AAQ00722"/>
    <property type="gene ID" value="Pro_1678"/>
</dbReference>
<dbReference type="KEGG" id="pma:Pro_1678"/>
<dbReference type="PATRIC" id="fig|167539.5.peg.1772"/>
<dbReference type="HOGENOM" id="CLU_215282_2_0_3"/>
<dbReference type="OrthoDB" id="541898at2"/>
<dbReference type="Proteomes" id="UP000001420">
    <property type="component" value="Chromosome"/>
</dbReference>
<dbReference type="GO" id="GO:0009522">
    <property type="term" value="C:photosystem I"/>
    <property type="evidence" value="ECO:0007669"/>
    <property type="project" value="UniProtKB-KW"/>
</dbReference>
<dbReference type="GO" id="GO:0031676">
    <property type="term" value="C:plasma membrane-derived thylakoid membrane"/>
    <property type="evidence" value="ECO:0007669"/>
    <property type="project" value="UniProtKB-SubCell"/>
</dbReference>
<dbReference type="GO" id="GO:0015979">
    <property type="term" value="P:photosynthesis"/>
    <property type="evidence" value="ECO:0007669"/>
    <property type="project" value="UniProtKB-KW"/>
</dbReference>
<dbReference type="InterPro" id="IPR001302">
    <property type="entry name" value="PSI_PsaI"/>
</dbReference>
<dbReference type="InterPro" id="IPR036357">
    <property type="entry name" value="PSI_PsaI_sf"/>
</dbReference>
<dbReference type="NCBIfam" id="NF008830">
    <property type="entry name" value="PRK11877.1"/>
    <property type="match status" value="1"/>
</dbReference>
<dbReference type="NCBIfam" id="TIGR03052">
    <property type="entry name" value="PS_I_psaI"/>
    <property type="match status" value="1"/>
</dbReference>
<dbReference type="Pfam" id="PF00796">
    <property type="entry name" value="PSI_8"/>
    <property type="match status" value="1"/>
</dbReference>
<dbReference type="SUPFAM" id="SSF81540">
    <property type="entry name" value="Subunit VIII of photosystem I reaction centre, PsaI"/>
    <property type="match status" value="1"/>
</dbReference>
<proteinExistence type="inferred from homology"/>
<gene>
    <name type="primary">psaI</name>
    <name type="ordered locus">Pro_1678</name>
</gene>
<keyword id="KW-0472">Membrane</keyword>
<keyword id="KW-0602">Photosynthesis</keyword>
<keyword id="KW-0603">Photosystem I</keyword>
<keyword id="KW-1185">Reference proteome</keyword>
<keyword id="KW-0793">Thylakoid</keyword>
<keyword id="KW-0812">Transmembrane</keyword>
<keyword id="KW-1133">Transmembrane helix</keyword>
<organism>
    <name type="scientific">Prochlorococcus marinus (strain SARG / CCMP1375 / SS120)</name>
    <dbReference type="NCBI Taxonomy" id="167539"/>
    <lineage>
        <taxon>Bacteria</taxon>
        <taxon>Bacillati</taxon>
        <taxon>Cyanobacteriota</taxon>
        <taxon>Cyanophyceae</taxon>
        <taxon>Synechococcales</taxon>
        <taxon>Prochlorococcaceae</taxon>
        <taxon>Prochlorococcus</taxon>
    </lineage>
</organism>
<protein>
    <recommendedName>
        <fullName>Photosystem I reaction center subunit VIII</fullName>
    </recommendedName>
</protein>
<evidence type="ECO:0000250" key="1"/>
<evidence type="ECO:0000255" key="2"/>
<evidence type="ECO:0000305" key="3"/>